<keyword id="KW-0067">ATP-binding</keyword>
<keyword id="KW-0093">Biotin biosynthesis</keyword>
<keyword id="KW-0436">Ligase</keyword>
<keyword id="KW-0460">Magnesium</keyword>
<keyword id="KW-0547">Nucleotide-binding</keyword>
<keyword id="KW-1185">Reference proteome</keyword>
<sequence length="261" mass="29037">MKGEAYYSVRMRASENGPHEEGGKHISGGERLVPFIGLNDAVSDLLEKGMSHSRGRPDFMQIQFDLVNEPIKLVQPLRIETNETVSAEEGQALARELISRAGVPESAVEKAFQGIAEYWGVRGAVLFDIHSGRRIDGRKEKGVRVSRLDWPEADFQRWAALCGVPPNPRLKEALAIASKVCEHPAVIAELCWSDDPDYITGYVAAKKLGYQRMTKMKEHGDESGCRIFFVDGSADVKSCIDDLEKQPVFIGQEVNHESIIR</sequence>
<comment type="function">
    <text evidence="1">Catalyzes the transformation of pimelate into pimeloyl-CoA with concomitant hydrolysis of ATP to AMP.</text>
</comment>
<comment type="catalytic activity">
    <reaction evidence="1">
        <text>heptanedioate + ATP + CoA = 6-carboxyhexanoyl-CoA + AMP + diphosphate</text>
        <dbReference type="Rhea" id="RHEA:14781"/>
        <dbReference type="ChEBI" id="CHEBI:30616"/>
        <dbReference type="ChEBI" id="CHEBI:33019"/>
        <dbReference type="ChEBI" id="CHEBI:36165"/>
        <dbReference type="ChEBI" id="CHEBI:57287"/>
        <dbReference type="ChEBI" id="CHEBI:57360"/>
        <dbReference type="ChEBI" id="CHEBI:456215"/>
        <dbReference type="EC" id="6.2.1.14"/>
    </reaction>
</comment>
<comment type="cofactor">
    <cofactor evidence="1">
        <name>Mg(2+)</name>
        <dbReference type="ChEBI" id="CHEBI:18420"/>
    </cofactor>
</comment>
<comment type="pathway">
    <text evidence="1">Metabolic intermediate metabolism; pimeloyl-CoA biosynthesis; pimeloyl-CoA from pimelate: step 1/1.</text>
</comment>
<comment type="subunit">
    <text evidence="1">Homodimer.</text>
</comment>
<comment type="similarity">
    <text evidence="1">Belongs to the BioW family.</text>
</comment>
<accession>Q65ML3</accession>
<accession>Q62Y06</accession>
<organism>
    <name type="scientific">Bacillus licheniformis (strain ATCC 14580 / DSM 13 / JCM 2505 / CCUG 7422 / NBRC 12200 / NCIMB 9375 / NCTC 10341 / NRRL NRS-1264 / Gibson 46)</name>
    <dbReference type="NCBI Taxonomy" id="279010"/>
    <lineage>
        <taxon>Bacteria</taxon>
        <taxon>Bacillati</taxon>
        <taxon>Bacillota</taxon>
        <taxon>Bacilli</taxon>
        <taxon>Bacillales</taxon>
        <taxon>Bacillaceae</taxon>
        <taxon>Bacillus</taxon>
    </lineage>
</organism>
<protein>
    <recommendedName>
        <fullName evidence="1">6-carboxyhexanoate--CoA ligase</fullName>
        <ecNumber evidence="1">6.2.1.14</ecNumber>
    </recommendedName>
    <alternativeName>
        <fullName evidence="1">Pimeloyl-CoA synthase</fullName>
    </alternativeName>
</protein>
<name>BIOW_BACLD</name>
<dbReference type="EC" id="6.2.1.14" evidence="1"/>
<dbReference type="EMBL" id="CP000002">
    <property type="protein sequence ID" value="AAU22352.2"/>
    <property type="molecule type" value="Genomic_DNA"/>
</dbReference>
<dbReference type="EMBL" id="AE017333">
    <property type="protein sequence ID" value="AAU39701.1"/>
    <property type="molecule type" value="Genomic_DNA"/>
</dbReference>
<dbReference type="RefSeq" id="WP_003179683.1">
    <property type="nucleotide sequence ID" value="NC_006322.1"/>
</dbReference>
<dbReference type="SMR" id="Q65ML3"/>
<dbReference type="STRING" id="279010.BL02411"/>
<dbReference type="KEGG" id="bld:BLi00766"/>
<dbReference type="KEGG" id="bli:BL02411"/>
<dbReference type="eggNOG" id="COG1424">
    <property type="taxonomic scope" value="Bacteria"/>
</dbReference>
<dbReference type="HOGENOM" id="CLU_076858_0_0_9"/>
<dbReference type="UniPathway" id="UPA00999">
    <property type="reaction ID" value="UER00351"/>
</dbReference>
<dbReference type="Proteomes" id="UP000000606">
    <property type="component" value="Chromosome"/>
</dbReference>
<dbReference type="GO" id="GO:0042410">
    <property type="term" value="F:6-carboxyhexanoate-CoA ligase activity"/>
    <property type="evidence" value="ECO:0007669"/>
    <property type="project" value="UniProtKB-UniRule"/>
</dbReference>
<dbReference type="GO" id="GO:0005524">
    <property type="term" value="F:ATP binding"/>
    <property type="evidence" value="ECO:0007669"/>
    <property type="project" value="UniProtKB-KW"/>
</dbReference>
<dbReference type="GO" id="GO:0000287">
    <property type="term" value="F:magnesium ion binding"/>
    <property type="evidence" value="ECO:0007669"/>
    <property type="project" value="UniProtKB-UniRule"/>
</dbReference>
<dbReference type="GO" id="GO:0009102">
    <property type="term" value="P:biotin biosynthetic process"/>
    <property type="evidence" value="ECO:0007669"/>
    <property type="project" value="UniProtKB-UniRule"/>
</dbReference>
<dbReference type="HAMAP" id="MF_00668">
    <property type="entry name" value="BioW"/>
    <property type="match status" value="1"/>
</dbReference>
<dbReference type="InterPro" id="IPR005499">
    <property type="entry name" value="BioW"/>
</dbReference>
<dbReference type="NCBIfam" id="TIGR01204">
    <property type="entry name" value="bioW"/>
    <property type="match status" value="1"/>
</dbReference>
<dbReference type="NCBIfam" id="NF002360">
    <property type="entry name" value="PRK01322.1"/>
    <property type="match status" value="1"/>
</dbReference>
<dbReference type="Pfam" id="PF03744">
    <property type="entry name" value="BioW"/>
    <property type="match status" value="1"/>
</dbReference>
<proteinExistence type="inferred from homology"/>
<gene>
    <name evidence="1" type="primary">bioW</name>
    <name type="ordered locus">BLi00766</name>
    <name type="ordered locus">BL02411</name>
</gene>
<feature type="chain" id="PRO_0000412078" description="6-carboxyhexanoate--CoA ligase">
    <location>
        <begin position="1"/>
        <end position="261"/>
    </location>
</feature>
<reference key="1">
    <citation type="journal article" date="2004" name="J. Mol. Microbiol. Biotechnol.">
        <title>The complete genome sequence of Bacillus licheniformis DSM13, an organism with great industrial potential.</title>
        <authorList>
            <person name="Veith B."/>
            <person name="Herzberg C."/>
            <person name="Steckel S."/>
            <person name="Feesche J."/>
            <person name="Maurer K.H."/>
            <person name="Ehrenreich P."/>
            <person name="Baeumer S."/>
            <person name="Henne A."/>
            <person name="Liesegang H."/>
            <person name="Merkl R."/>
            <person name="Ehrenreich A."/>
            <person name="Gottschalk G."/>
        </authorList>
    </citation>
    <scope>NUCLEOTIDE SEQUENCE [LARGE SCALE GENOMIC DNA]</scope>
    <source>
        <strain>ATCC 14580 / DSM 13 / JCM 2505 / CCUG 7422 / NBRC 12200 / NCIMB 9375 / NCTC 10341 / NRRL NRS-1264 / Gibson 46</strain>
    </source>
</reference>
<reference key="2">
    <citation type="journal article" date="2004" name="Genome Biol.">
        <title>Complete genome sequence of the industrial bacterium Bacillus licheniformis and comparisons with closely related Bacillus species.</title>
        <authorList>
            <person name="Rey M.W."/>
            <person name="Ramaiya P."/>
            <person name="Nelson B.A."/>
            <person name="Brody-Karpin S.D."/>
            <person name="Zaretsky E.J."/>
            <person name="Tang M."/>
            <person name="Lopez de Leon A."/>
            <person name="Xiang H."/>
            <person name="Gusti V."/>
            <person name="Clausen I.G."/>
            <person name="Olsen P.B."/>
            <person name="Rasmussen M.D."/>
            <person name="Andersen J.T."/>
            <person name="Joergensen P.L."/>
            <person name="Larsen T.S."/>
            <person name="Sorokin A."/>
            <person name="Bolotin A."/>
            <person name="Lapidus A."/>
            <person name="Galleron N."/>
            <person name="Ehrlich S.D."/>
            <person name="Berka R.M."/>
        </authorList>
    </citation>
    <scope>NUCLEOTIDE SEQUENCE [LARGE SCALE GENOMIC DNA]</scope>
    <source>
        <strain>ATCC 14580 / DSM 13 / JCM 2505 / CCUG 7422 / NBRC 12200 / NCIMB 9375 / NCTC 10341 / NRRL NRS-1264 / Gibson 46</strain>
    </source>
</reference>
<evidence type="ECO:0000255" key="1">
    <source>
        <dbReference type="HAMAP-Rule" id="MF_00668"/>
    </source>
</evidence>